<reference key="1">
    <citation type="journal article" date="2009" name="PLoS Genet.">
        <title>Organised genome dynamics in the Escherichia coli species results in highly diverse adaptive paths.</title>
        <authorList>
            <person name="Touchon M."/>
            <person name="Hoede C."/>
            <person name="Tenaillon O."/>
            <person name="Barbe V."/>
            <person name="Baeriswyl S."/>
            <person name="Bidet P."/>
            <person name="Bingen E."/>
            <person name="Bonacorsi S."/>
            <person name="Bouchier C."/>
            <person name="Bouvet O."/>
            <person name="Calteau A."/>
            <person name="Chiapello H."/>
            <person name="Clermont O."/>
            <person name="Cruveiller S."/>
            <person name="Danchin A."/>
            <person name="Diard M."/>
            <person name="Dossat C."/>
            <person name="Karoui M.E."/>
            <person name="Frapy E."/>
            <person name="Garry L."/>
            <person name="Ghigo J.M."/>
            <person name="Gilles A.M."/>
            <person name="Johnson J."/>
            <person name="Le Bouguenec C."/>
            <person name="Lescat M."/>
            <person name="Mangenot S."/>
            <person name="Martinez-Jehanne V."/>
            <person name="Matic I."/>
            <person name="Nassif X."/>
            <person name="Oztas S."/>
            <person name="Petit M.A."/>
            <person name="Pichon C."/>
            <person name="Rouy Z."/>
            <person name="Ruf C.S."/>
            <person name="Schneider D."/>
            <person name="Tourret J."/>
            <person name="Vacherie B."/>
            <person name="Vallenet D."/>
            <person name="Medigue C."/>
            <person name="Rocha E.P.C."/>
            <person name="Denamur E."/>
        </authorList>
    </citation>
    <scope>NUCLEOTIDE SEQUENCE [LARGE SCALE GENOMIC DNA]</scope>
    <source>
        <strain>ATCC 35469 / DSM 13698 / BCRC 15582 / CCUG 18766 / IAM 14443 / JCM 21226 / LMG 7866 / NBRC 102419 / NCTC 12128 / CDC 0568-73</strain>
    </source>
</reference>
<organism>
    <name type="scientific">Escherichia fergusonii (strain ATCC 35469 / DSM 13698 / CCUG 18766 / IAM 14443 / JCM 21226 / LMG 7866 / NBRC 102419 / NCTC 12128 / CDC 0568-73)</name>
    <dbReference type="NCBI Taxonomy" id="585054"/>
    <lineage>
        <taxon>Bacteria</taxon>
        <taxon>Pseudomonadati</taxon>
        <taxon>Pseudomonadota</taxon>
        <taxon>Gammaproteobacteria</taxon>
        <taxon>Enterobacterales</taxon>
        <taxon>Enterobacteriaceae</taxon>
        <taxon>Escherichia</taxon>
    </lineage>
</organism>
<comment type="function">
    <text evidence="1">Key enzyme in the regulation of glycerol uptake and metabolism. Catalyzes the phosphorylation of glycerol to yield sn-glycerol 3-phosphate.</text>
</comment>
<comment type="catalytic activity">
    <reaction evidence="1">
        <text>glycerol + ATP = sn-glycerol 3-phosphate + ADP + H(+)</text>
        <dbReference type="Rhea" id="RHEA:21644"/>
        <dbReference type="ChEBI" id="CHEBI:15378"/>
        <dbReference type="ChEBI" id="CHEBI:17754"/>
        <dbReference type="ChEBI" id="CHEBI:30616"/>
        <dbReference type="ChEBI" id="CHEBI:57597"/>
        <dbReference type="ChEBI" id="CHEBI:456216"/>
        <dbReference type="EC" id="2.7.1.30"/>
    </reaction>
</comment>
<comment type="activity regulation">
    <text evidence="1">Activity of this regulatory enzyme is affected by several metabolites. Allosterically and non-competitively inhibited by fructose 1,6-bisphosphate (FBP) and unphosphorylated phosphocarrier protein EIIA-Glc (III-Glc), an integral component of the bacterial phosphotransferase (PTS) system.</text>
</comment>
<comment type="pathway">
    <text evidence="1">Polyol metabolism; glycerol degradation via glycerol kinase pathway; sn-glycerol 3-phosphate from glycerol: step 1/1.</text>
</comment>
<comment type="subunit">
    <text evidence="1">Homotetramer and homodimer (in equilibrium). Heterodimer with EIIA-Glc. Binds 1 zinc ion per glycerol kinase EIIA-Glc dimer. The zinc ion is important for dimerization.</text>
</comment>
<comment type="similarity">
    <text evidence="1">Belongs to the FGGY kinase family.</text>
</comment>
<name>GLPK_ESCF3</name>
<gene>
    <name evidence="1" type="primary">glpK</name>
    <name type="ordered locus">EFER_3847</name>
</gene>
<sequence length="502" mass="56262">MTEKKYIVALDQGTTSSRAVVMDHDANIISVSQREFEQIYPKPGWVEHDPMEIWATQSSTLVEVLAKADISSDQIAAIGITNQRETTIVWEKETGKPIYNAIVWQCRRTAEICEHLKRDGMEEYIRNNTGLVIDPYFSGTKVKWILDHVEGSRERAKRGELLFGTVDTWLIWKMTQGRVHVTDYTNASRTMLFNIHTLDWDDKMLEVLDIPREMLPEVRRSSEVYGQTNIGGKGGTRIPISGIAGDQQAALFGQLCVKEGMAKNTYGTGCFMLMNTGEKAVKSENGLLTTIACGPTGEVNYALEGAVFMAGASIQWLRDEMKLINDAYDSEYFATKVQNTNGVYVVPAFTGLGAPYWDPYARGAIFGLTRGVNANHIIRATLESIAYQTRDVLEAMQADSGIRLHALRVDGGAVANNFLMQFQSDILGTRVERPEVREVTALGAAYLAGLAVGFWQNLDELQEKAVIEREFRPGIETTERNYRYAGWKKAVKRAMAWEEHDE</sequence>
<accession>B7LUS9</accession>
<feature type="chain" id="PRO_1000118554" description="Glycerol kinase">
    <location>
        <begin position="1"/>
        <end position="502"/>
    </location>
</feature>
<feature type="binding site" evidence="1">
    <location>
        <position position="14"/>
    </location>
    <ligand>
        <name>ADP</name>
        <dbReference type="ChEBI" id="CHEBI:456216"/>
    </ligand>
</feature>
<feature type="binding site" evidence="1">
    <location>
        <position position="14"/>
    </location>
    <ligand>
        <name>ATP</name>
        <dbReference type="ChEBI" id="CHEBI:30616"/>
    </ligand>
</feature>
<feature type="binding site" evidence="1">
    <location>
        <position position="14"/>
    </location>
    <ligand>
        <name>sn-glycerol 3-phosphate</name>
        <dbReference type="ChEBI" id="CHEBI:57597"/>
    </ligand>
</feature>
<feature type="binding site" evidence="1">
    <location>
        <position position="15"/>
    </location>
    <ligand>
        <name>ATP</name>
        <dbReference type="ChEBI" id="CHEBI:30616"/>
    </ligand>
</feature>
<feature type="binding site" evidence="1">
    <location>
        <position position="16"/>
    </location>
    <ligand>
        <name>ATP</name>
        <dbReference type="ChEBI" id="CHEBI:30616"/>
    </ligand>
</feature>
<feature type="binding site" evidence="1">
    <location>
        <position position="18"/>
    </location>
    <ligand>
        <name>ADP</name>
        <dbReference type="ChEBI" id="CHEBI:456216"/>
    </ligand>
</feature>
<feature type="binding site" evidence="1">
    <location>
        <position position="84"/>
    </location>
    <ligand>
        <name>glycerol</name>
        <dbReference type="ChEBI" id="CHEBI:17754"/>
    </ligand>
</feature>
<feature type="binding site" evidence="1">
    <location>
        <position position="84"/>
    </location>
    <ligand>
        <name>sn-glycerol 3-phosphate</name>
        <dbReference type="ChEBI" id="CHEBI:57597"/>
    </ligand>
</feature>
<feature type="binding site" evidence="1">
    <location>
        <position position="85"/>
    </location>
    <ligand>
        <name>glycerol</name>
        <dbReference type="ChEBI" id="CHEBI:17754"/>
    </ligand>
</feature>
<feature type="binding site" evidence="1">
    <location>
        <position position="85"/>
    </location>
    <ligand>
        <name>sn-glycerol 3-phosphate</name>
        <dbReference type="ChEBI" id="CHEBI:57597"/>
    </ligand>
</feature>
<feature type="binding site" evidence="1">
    <location>
        <position position="136"/>
    </location>
    <ligand>
        <name>glycerol</name>
        <dbReference type="ChEBI" id="CHEBI:17754"/>
    </ligand>
</feature>
<feature type="binding site" evidence="1">
    <location>
        <position position="136"/>
    </location>
    <ligand>
        <name>sn-glycerol 3-phosphate</name>
        <dbReference type="ChEBI" id="CHEBI:57597"/>
    </ligand>
</feature>
<feature type="binding site" evidence="1">
    <location>
        <position position="246"/>
    </location>
    <ligand>
        <name>glycerol</name>
        <dbReference type="ChEBI" id="CHEBI:17754"/>
    </ligand>
</feature>
<feature type="binding site" evidence="1">
    <location>
        <position position="246"/>
    </location>
    <ligand>
        <name>sn-glycerol 3-phosphate</name>
        <dbReference type="ChEBI" id="CHEBI:57597"/>
    </ligand>
</feature>
<feature type="binding site" evidence="1">
    <location>
        <position position="247"/>
    </location>
    <ligand>
        <name>glycerol</name>
        <dbReference type="ChEBI" id="CHEBI:17754"/>
    </ligand>
</feature>
<feature type="binding site" evidence="1">
    <location>
        <position position="268"/>
    </location>
    <ligand>
        <name>ADP</name>
        <dbReference type="ChEBI" id="CHEBI:456216"/>
    </ligand>
</feature>
<feature type="binding site" evidence="1">
    <location>
        <position position="268"/>
    </location>
    <ligand>
        <name>ATP</name>
        <dbReference type="ChEBI" id="CHEBI:30616"/>
    </ligand>
</feature>
<feature type="binding site" evidence="1">
    <location>
        <position position="311"/>
    </location>
    <ligand>
        <name>ADP</name>
        <dbReference type="ChEBI" id="CHEBI:456216"/>
    </ligand>
</feature>
<feature type="binding site" evidence="1">
    <location>
        <position position="311"/>
    </location>
    <ligand>
        <name>ATP</name>
        <dbReference type="ChEBI" id="CHEBI:30616"/>
    </ligand>
</feature>
<feature type="binding site" evidence="1">
    <location>
        <position position="315"/>
    </location>
    <ligand>
        <name>ATP</name>
        <dbReference type="ChEBI" id="CHEBI:30616"/>
    </ligand>
</feature>
<feature type="binding site" evidence="1">
    <location>
        <position position="412"/>
    </location>
    <ligand>
        <name>ADP</name>
        <dbReference type="ChEBI" id="CHEBI:456216"/>
    </ligand>
</feature>
<feature type="binding site" evidence="1">
    <location>
        <position position="412"/>
    </location>
    <ligand>
        <name>ATP</name>
        <dbReference type="ChEBI" id="CHEBI:30616"/>
    </ligand>
</feature>
<feature type="binding site" evidence="1">
    <location>
        <position position="416"/>
    </location>
    <ligand>
        <name>ADP</name>
        <dbReference type="ChEBI" id="CHEBI:456216"/>
    </ligand>
</feature>
<dbReference type="EC" id="2.7.1.30" evidence="1"/>
<dbReference type="EMBL" id="CU928158">
    <property type="protein sequence ID" value="CAQ91282.1"/>
    <property type="molecule type" value="Genomic_DNA"/>
</dbReference>
<dbReference type="RefSeq" id="WP_000136798.1">
    <property type="nucleotide sequence ID" value="NC_011740.1"/>
</dbReference>
<dbReference type="SMR" id="B7LUS9"/>
<dbReference type="GeneID" id="75059441"/>
<dbReference type="KEGG" id="efe:EFER_3847"/>
<dbReference type="HOGENOM" id="CLU_009281_2_3_6"/>
<dbReference type="OrthoDB" id="9805576at2"/>
<dbReference type="UniPathway" id="UPA00618">
    <property type="reaction ID" value="UER00672"/>
</dbReference>
<dbReference type="Proteomes" id="UP000000745">
    <property type="component" value="Chromosome"/>
</dbReference>
<dbReference type="GO" id="GO:0005829">
    <property type="term" value="C:cytosol"/>
    <property type="evidence" value="ECO:0007669"/>
    <property type="project" value="TreeGrafter"/>
</dbReference>
<dbReference type="GO" id="GO:0005524">
    <property type="term" value="F:ATP binding"/>
    <property type="evidence" value="ECO:0007669"/>
    <property type="project" value="UniProtKB-UniRule"/>
</dbReference>
<dbReference type="GO" id="GO:0004370">
    <property type="term" value="F:glycerol kinase activity"/>
    <property type="evidence" value="ECO:0000250"/>
    <property type="project" value="UniProtKB"/>
</dbReference>
<dbReference type="GO" id="GO:0046872">
    <property type="term" value="F:metal ion binding"/>
    <property type="evidence" value="ECO:0007669"/>
    <property type="project" value="UniProtKB-KW"/>
</dbReference>
<dbReference type="GO" id="GO:0019563">
    <property type="term" value="P:glycerol catabolic process"/>
    <property type="evidence" value="ECO:0007669"/>
    <property type="project" value="UniProtKB-UniRule"/>
</dbReference>
<dbReference type="GO" id="GO:0006071">
    <property type="term" value="P:glycerol metabolic process"/>
    <property type="evidence" value="ECO:0000250"/>
    <property type="project" value="UniProtKB"/>
</dbReference>
<dbReference type="GO" id="GO:0006072">
    <property type="term" value="P:glycerol-3-phosphate metabolic process"/>
    <property type="evidence" value="ECO:0007669"/>
    <property type="project" value="InterPro"/>
</dbReference>
<dbReference type="CDD" id="cd07786">
    <property type="entry name" value="FGGY_EcGK_like"/>
    <property type="match status" value="1"/>
</dbReference>
<dbReference type="FunFam" id="3.30.420.40:FF:000007">
    <property type="entry name" value="Glycerol kinase"/>
    <property type="match status" value="1"/>
</dbReference>
<dbReference type="FunFam" id="3.30.420.40:FF:000008">
    <property type="entry name" value="Glycerol kinase"/>
    <property type="match status" value="1"/>
</dbReference>
<dbReference type="Gene3D" id="3.30.420.40">
    <property type="match status" value="2"/>
</dbReference>
<dbReference type="HAMAP" id="MF_00186">
    <property type="entry name" value="Glycerol_kin"/>
    <property type="match status" value="1"/>
</dbReference>
<dbReference type="InterPro" id="IPR043129">
    <property type="entry name" value="ATPase_NBD"/>
</dbReference>
<dbReference type="InterPro" id="IPR000577">
    <property type="entry name" value="Carb_kinase_FGGY"/>
</dbReference>
<dbReference type="InterPro" id="IPR018483">
    <property type="entry name" value="Carb_kinase_FGGY_CS"/>
</dbReference>
<dbReference type="InterPro" id="IPR018485">
    <property type="entry name" value="FGGY_C"/>
</dbReference>
<dbReference type="InterPro" id="IPR018484">
    <property type="entry name" value="FGGY_N"/>
</dbReference>
<dbReference type="InterPro" id="IPR005999">
    <property type="entry name" value="Glycerol_kin"/>
</dbReference>
<dbReference type="NCBIfam" id="TIGR01311">
    <property type="entry name" value="glycerol_kin"/>
    <property type="match status" value="1"/>
</dbReference>
<dbReference type="NCBIfam" id="NF000756">
    <property type="entry name" value="PRK00047.1"/>
    <property type="match status" value="1"/>
</dbReference>
<dbReference type="PANTHER" id="PTHR10196:SF69">
    <property type="entry name" value="GLYCEROL KINASE"/>
    <property type="match status" value="1"/>
</dbReference>
<dbReference type="PANTHER" id="PTHR10196">
    <property type="entry name" value="SUGAR KINASE"/>
    <property type="match status" value="1"/>
</dbReference>
<dbReference type="Pfam" id="PF02782">
    <property type="entry name" value="FGGY_C"/>
    <property type="match status" value="1"/>
</dbReference>
<dbReference type="Pfam" id="PF00370">
    <property type="entry name" value="FGGY_N"/>
    <property type="match status" value="1"/>
</dbReference>
<dbReference type="PIRSF" id="PIRSF000538">
    <property type="entry name" value="GlpK"/>
    <property type="match status" value="1"/>
</dbReference>
<dbReference type="SUPFAM" id="SSF53067">
    <property type="entry name" value="Actin-like ATPase domain"/>
    <property type="match status" value="2"/>
</dbReference>
<dbReference type="PROSITE" id="PS00933">
    <property type="entry name" value="FGGY_KINASES_1"/>
    <property type="match status" value="1"/>
</dbReference>
<dbReference type="PROSITE" id="PS00445">
    <property type="entry name" value="FGGY_KINASES_2"/>
    <property type="match status" value="1"/>
</dbReference>
<keyword id="KW-0021">Allosteric enzyme</keyword>
<keyword id="KW-0067">ATP-binding</keyword>
<keyword id="KW-0319">Glycerol metabolism</keyword>
<keyword id="KW-0418">Kinase</keyword>
<keyword id="KW-0479">Metal-binding</keyword>
<keyword id="KW-0547">Nucleotide-binding</keyword>
<keyword id="KW-0808">Transferase</keyword>
<keyword id="KW-0862">Zinc</keyword>
<proteinExistence type="inferred from homology"/>
<evidence type="ECO:0000255" key="1">
    <source>
        <dbReference type="HAMAP-Rule" id="MF_00186"/>
    </source>
</evidence>
<protein>
    <recommendedName>
        <fullName evidence="1">Glycerol kinase</fullName>
        <ecNumber evidence="1">2.7.1.30</ecNumber>
    </recommendedName>
    <alternativeName>
        <fullName evidence="1">ATP:glycerol 3-phosphotransferase</fullName>
    </alternativeName>
    <alternativeName>
        <fullName evidence="1">Glycerokinase</fullName>
        <shortName evidence="1">GK</shortName>
    </alternativeName>
</protein>